<name>GLPK_RHIWR</name>
<keyword id="KW-0067">ATP-binding</keyword>
<keyword id="KW-0319">Glycerol metabolism</keyword>
<keyword id="KW-0418">Kinase</keyword>
<keyword id="KW-0547">Nucleotide-binding</keyword>
<keyword id="KW-1185">Reference proteome</keyword>
<keyword id="KW-0808">Transferase</keyword>
<organism>
    <name type="scientific">Rhizorhabdus wittichii (strain DSM 6014 / CCUG 31198 / JCM 15750 / NBRC 105917 / EY 4224 / RW1)</name>
    <name type="common">Sphingomonas wittichii</name>
    <dbReference type="NCBI Taxonomy" id="392499"/>
    <lineage>
        <taxon>Bacteria</taxon>
        <taxon>Pseudomonadati</taxon>
        <taxon>Pseudomonadota</taxon>
        <taxon>Alphaproteobacteria</taxon>
        <taxon>Sphingomonadales</taxon>
        <taxon>Sphingomonadaceae</taxon>
        <taxon>Rhizorhabdus</taxon>
    </lineage>
</organism>
<evidence type="ECO:0000255" key="1">
    <source>
        <dbReference type="HAMAP-Rule" id="MF_00186"/>
    </source>
</evidence>
<dbReference type="EC" id="2.7.1.30" evidence="1"/>
<dbReference type="EMBL" id="CP000699">
    <property type="protein sequence ID" value="ABQ70560.1"/>
    <property type="molecule type" value="Genomic_DNA"/>
</dbReference>
<dbReference type="SMR" id="A5VE44"/>
<dbReference type="STRING" id="392499.Swit_4220"/>
<dbReference type="PaxDb" id="392499-Swit_4220"/>
<dbReference type="KEGG" id="swi:Swit_4220"/>
<dbReference type="eggNOG" id="COG0554">
    <property type="taxonomic scope" value="Bacteria"/>
</dbReference>
<dbReference type="HOGENOM" id="CLU_009281_2_3_5"/>
<dbReference type="OrthoDB" id="9805576at2"/>
<dbReference type="UniPathway" id="UPA00618">
    <property type="reaction ID" value="UER00672"/>
</dbReference>
<dbReference type="Proteomes" id="UP000001989">
    <property type="component" value="Chromosome"/>
</dbReference>
<dbReference type="GO" id="GO:0005829">
    <property type="term" value="C:cytosol"/>
    <property type="evidence" value="ECO:0007669"/>
    <property type="project" value="TreeGrafter"/>
</dbReference>
<dbReference type="GO" id="GO:0005524">
    <property type="term" value="F:ATP binding"/>
    <property type="evidence" value="ECO:0007669"/>
    <property type="project" value="UniProtKB-UniRule"/>
</dbReference>
<dbReference type="GO" id="GO:0004370">
    <property type="term" value="F:glycerol kinase activity"/>
    <property type="evidence" value="ECO:0000250"/>
    <property type="project" value="UniProtKB"/>
</dbReference>
<dbReference type="GO" id="GO:0019563">
    <property type="term" value="P:glycerol catabolic process"/>
    <property type="evidence" value="ECO:0007669"/>
    <property type="project" value="UniProtKB-UniRule"/>
</dbReference>
<dbReference type="GO" id="GO:0006071">
    <property type="term" value="P:glycerol metabolic process"/>
    <property type="evidence" value="ECO:0000250"/>
    <property type="project" value="UniProtKB"/>
</dbReference>
<dbReference type="GO" id="GO:0006072">
    <property type="term" value="P:glycerol-3-phosphate metabolic process"/>
    <property type="evidence" value="ECO:0007669"/>
    <property type="project" value="InterPro"/>
</dbReference>
<dbReference type="CDD" id="cd07769">
    <property type="entry name" value="ASKHA_NBD_FGGY_GK"/>
    <property type="match status" value="1"/>
</dbReference>
<dbReference type="FunFam" id="3.30.420.40:FF:000007">
    <property type="entry name" value="Glycerol kinase"/>
    <property type="match status" value="1"/>
</dbReference>
<dbReference type="FunFam" id="3.30.420.40:FF:000008">
    <property type="entry name" value="Glycerol kinase"/>
    <property type="match status" value="1"/>
</dbReference>
<dbReference type="Gene3D" id="3.30.420.40">
    <property type="match status" value="2"/>
</dbReference>
<dbReference type="HAMAP" id="MF_00186">
    <property type="entry name" value="Glycerol_kin"/>
    <property type="match status" value="1"/>
</dbReference>
<dbReference type="InterPro" id="IPR043129">
    <property type="entry name" value="ATPase_NBD"/>
</dbReference>
<dbReference type="InterPro" id="IPR000577">
    <property type="entry name" value="Carb_kinase_FGGY"/>
</dbReference>
<dbReference type="InterPro" id="IPR018483">
    <property type="entry name" value="Carb_kinase_FGGY_CS"/>
</dbReference>
<dbReference type="InterPro" id="IPR018485">
    <property type="entry name" value="FGGY_C"/>
</dbReference>
<dbReference type="InterPro" id="IPR018484">
    <property type="entry name" value="FGGY_N"/>
</dbReference>
<dbReference type="InterPro" id="IPR005999">
    <property type="entry name" value="Glycerol_kin"/>
</dbReference>
<dbReference type="NCBIfam" id="TIGR01311">
    <property type="entry name" value="glycerol_kin"/>
    <property type="match status" value="1"/>
</dbReference>
<dbReference type="NCBIfam" id="NF000756">
    <property type="entry name" value="PRK00047.1"/>
    <property type="match status" value="1"/>
</dbReference>
<dbReference type="PANTHER" id="PTHR10196:SF69">
    <property type="entry name" value="GLYCEROL KINASE"/>
    <property type="match status" value="1"/>
</dbReference>
<dbReference type="PANTHER" id="PTHR10196">
    <property type="entry name" value="SUGAR KINASE"/>
    <property type="match status" value="1"/>
</dbReference>
<dbReference type="Pfam" id="PF02782">
    <property type="entry name" value="FGGY_C"/>
    <property type="match status" value="1"/>
</dbReference>
<dbReference type="Pfam" id="PF00370">
    <property type="entry name" value="FGGY_N"/>
    <property type="match status" value="1"/>
</dbReference>
<dbReference type="PIRSF" id="PIRSF000538">
    <property type="entry name" value="GlpK"/>
    <property type="match status" value="1"/>
</dbReference>
<dbReference type="SUPFAM" id="SSF53067">
    <property type="entry name" value="Actin-like ATPase domain"/>
    <property type="match status" value="2"/>
</dbReference>
<dbReference type="PROSITE" id="PS00933">
    <property type="entry name" value="FGGY_KINASES_1"/>
    <property type="match status" value="1"/>
</dbReference>
<dbReference type="PROSITE" id="PS00445">
    <property type="entry name" value="FGGY_KINASES_2"/>
    <property type="match status" value="1"/>
</dbReference>
<feature type="chain" id="PRO_1000020790" description="Glycerol kinase">
    <location>
        <begin position="1"/>
        <end position="509"/>
    </location>
</feature>
<feature type="binding site" evidence="1">
    <location>
        <position position="12"/>
    </location>
    <ligand>
        <name>ADP</name>
        <dbReference type="ChEBI" id="CHEBI:456216"/>
    </ligand>
</feature>
<feature type="binding site" evidence="1">
    <location>
        <position position="12"/>
    </location>
    <ligand>
        <name>ATP</name>
        <dbReference type="ChEBI" id="CHEBI:30616"/>
    </ligand>
</feature>
<feature type="binding site" evidence="1">
    <location>
        <position position="12"/>
    </location>
    <ligand>
        <name>sn-glycerol 3-phosphate</name>
        <dbReference type="ChEBI" id="CHEBI:57597"/>
    </ligand>
</feature>
<feature type="binding site" evidence="1">
    <location>
        <position position="13"/>
    </location>
    <ligand>
        <name>ATP</name>
        <dbReference type="ChEBI" id="CHEBI:30616"/>
    </ligand>
</feature>
<feature type="binding site" evidence="1">
    <location>
        <position position="14"/>
    </location>
    <ligand>
        <name>ATP</name>
        <dbReference type="ChEBI" id="CHEBI:30616"/>
    </ligand>
</feature>
<feature type="binding site" evidence="1">
    <location>
        <position position="16"/>
    </location>
    <ligand>
        <name>ADP</name>
        <dbReference type="ChEBI" id="CHEBI:456216"/>
    </ligand>
</feature>
<feature type="binding site" evidence="1">
    <location>
        <position position="82"/>
    </location>
    <ligand>
        <name>glycerol</name>
        <dbReference type="ChEBI" id="CHEBI:17754"/>
    </ligand>
</feature>
<feature type="binding site" evidence="1">
    <location>
        <position position="82"/>
    </location>
    <ligand>
        <name>sn-glycerol 3-phosphate</name>
        <dbReference type="ChEBI" id="CHEBI:57597"/>
    </ligand>
</feature>
<feature type="binding site" evidence="1">
    <location>
        <position position="83"/>
    </location>
    <ligand>
        <name>glycerol</name>
        <dbReference type="ChEBI" id="CHEBI:17754"/>
    </ligand>
</feature>
<feature type="binding site" evidence="1">
    <location>
        <position position="83"/>
    </location>
    <ligand>
        <name>sn-glycerol 3-phosphate</name>
        <dbReference type="ChEBI" id="CHEBI:57597"/>
    </ligand>
</feature>
<feature type="binding site" evidence="1">
    <location>
        <position position="134"/>
    </location>
    <ligand>
        <name>glycerol</name>
        <dbReference type="ChEBI" id="CHEBI:17754"/>
    </ligand>
</feature>
<feature type="binding site" evidence="1">
    <location>
        <position position="134"/>
    </location>
    <ligand>
        <name>sn-glycerol 3-phosphate</name>
        <dbReference type="ChEBI" id="CHEBI:57597"/>
    </ligand>
</feature>
<feature type="binding site" evidence="1">
    <location>
        <position position="245"/>
    </location>
    <ligand>
        <name>glycerol</name>
        <dbReference type="ChEBI" id="CHEBI:17754"/>
    </ligand>
</feature>
<feature type="binding site" evidence="1">
    <location>
        <position position="245"/>
    </location>
    <ligand>
        <name>sn-glycerol 3-phosphate</name>
        <dbReference type="ChEBI" id="CHEBI:57597"/>
    </ligand>
</feature>
<feature type="binding site" evidence="1">
    <location>
        <position position="246"/>
    </location>
    <ligand>
        <name>glycerol</name>
        <dbReference type="ChEBI" id="CHEBI:17754"/>
    </ligand>
</feature>
<feature type="binding site" evidence="1">
    <location>
        <position position="267"/>
    </location>
    <ligand>
        <name>ADP</name>
        <dbReference type="ChEBI" id="CHEBI:456216"/>
    </ligand>
</feature>
<feature type="binding site" evidence="1">
    <location>
        <position position="267"/>
    </location>
    <ligand>
        <name>ATP</name>
        <dbReference type="ChEBI" id="CHEBI:30616"/>
    </ligand>
</feature>
<feature type="binding site" evidence="1">
    <location>
        <position position="311"/>
    </location>
    <ligand>
        <name>ADP</name>
        <dbReference type="ChEBI" id="CHEBI:456216"/>
    </ligand>
</feature>
<feature type="binding site" evidence="1">
    <location>
        <position position="311"/>
    </location>
    <ligand>
        <name>ATP</name>
        <dbReference type="ChEBI" id="CHEBI:30616"/>
    </ligand>
</feature>
<feature type="binding site" evidence="1">
    <location>
        <position position="315"/>
    </location>
    <ligand>
        <name>ATP</name>
        <dbReference type="ChEBI" id="CHEBI:30616"/>
    </ligand>
</feature>
<feature type="binding site" evidence="1">
    <location>
        <position position="412"/>
    </location>
    <ligand>
        <name>ADP</name>
        <dbReference type="ChEBI" id="CHEBI:456216"/>
    </ligand>
</feature>
<feature type="binding site" evidence="1">
    <location>
        <position position="412"/>
    </location>
    <ligand>
        <name>ATP</name>
        <dbReference type="ChEBI" id="CHEBI:30616"/>
    </ligand>
</feature>
<feature type="binding site" evidence="1">
    <location>
        <position position="416"/>
    </location>
    <ligand>
        <name>ADP</name>
        <dbReference type="ChEBI" id="CHEBI:456216"/>
    </ligand>
</feature>
<gene>
    <name evidence="1" type="primary">glpK</name>
    <name type="ordered locus">Swit_4220</name>
</gene>
<comment type="function">
    <text evidence="1">Key enzyme in the regulation of glycerol uptake and metabolism. Catalyzes the phosphorylation of glycerol to yield sn-glycerol 3-phosphate.</text>
</comment>
<comment type="catalytic activity">
    <reaction evidence="1">
        <text>glycerol + ATP = sn-glycerol 3-phosphate + ADP + H(+)</text>
        <dbReference type="Rhea" id="RHEA:21644"/>
        <dbReference type="ChEBI" id="CHEBI:15378"/>
        <dbReference type="ChEBI" id="CHEBI:17754"/>
        <dbReference type="ChEBI" id="CHEBI:30616"/>
        <dbReference type="ChEBI" id="CHEBI:57597"/>
        <dbReference type="ChEBI" id="CHEBI:456216"/>
        <dbReference type="EC" id="2.7.1.30"/>
    </reaction>
</comment>
<comment type="activity regulation">
    <text evidence="1">Inhibited by fructose 1,6-bisphosphate (FBP).</text>
</comment>
<comment type="pathway">
    <text evidence="1">Polyol metabolism; glycerol degradation via glycerol kinase pathway; sn-glycerol 3-phosphate from glycerol: step 1/1.</text>
</comment>
<comment type="similarity">
    <text evidence="1">Belongs to the FGGY kinase family.</text>
</comment>
<sequence length="509" mass="55147">MTQFVGAIDQGTTSSRFIVFDRHGAILAVAQKEHRQIYPRPGWVEHDPLEILANTQEVIGAALARANLTAADLAAVGITNQRETSLLWDRETGRPLCNALVWMDTRTDELVQRYRRDGGQDRFRDRTGLPLATYFSALKLRWILDNVDGARAQAESGRALFGTIDSWLAWNLTGGPDGGVHLTDVTNASRTMLMDLATCRWDDDLLATFGIPRACLPRIVASSDLHGTIRTPPLDGARLAGILGDQQAALVGQACFAPGEAKNTYGTGSFLLMNTGTEPVRSKAGLLTTLAYRFGDEPPRYALEGAIAITGALVQWLRDNLGLFDSAPEIEALARSVPDNGDVYIVPAFSGLYAPYWDDSARGVIAGLTRFSNRGHIARAALEATAYQLCDVVAAMEADSGIRLATLKTDGGMVANELLMQFQADMLGAPVVRPRITETTALGAAYAAGLAVGYWSGTQELRDNWGVDATWRPTMPAELRAHHQRSWKKAIGKSLGWIDRPQAAADDVG</sequence>
<reference key="1">
    <citation type="journal article" date="2010" name="J. Bacteriol.">
        <title>Genome sequence of the dioxin-mineralizing bacterium Sphingomonas wittichii RW1.</title>
        <authorList>
            <person name="Miller T.R."/>
            <person name="Delcher A.L."/>
            <person name="Salzberg S.L."/>
            <person name="Saunders E."/>
            <person name="Detter J.C."/>
            <person name="Halden R.U."/>
        </authorList>
    </citation>
    <scope>NUCLEOTIDE SEQUENCE [LARGE SCALE GENOMIC DNA]</scope>
    <source>
        <strain>DSM 6014 / CCUG 31198 / JCM 15750 / NBRC 105917 / EY 4224 / RW1</strain>
    </source>
</reference>
<protein>
    <recommendedName>
        <fullName evidence="1">Glycerol kinase</fullName>
        <ecNumber evidence="1">2.7.1.30</ecNumber>
    </recommendedName>
    <alternativeName>
        <fullName evidence="1">ATP:glycerol 3-phosphotransferase</fullName>
    </alternativeName>
    <alternativeName>
        <fullName evidence="1">Glycerokinase</fullName>
        <shortName evidence="1">GK</shortName>
    </alternativeName>
</protein>
<proteinExistence type="inferred from homology"/>
<accession>A5VE44</accession>